<evidence type="ECO:0000250" key="1">
    <source>
        <dbReference type="UniProtKB" id="P11730"/>
    </source>
</evidence>
<evidence type="ECO:0000250" key="2">
    <source>
        <dbReference type="UniProtKB" id="Q13555"/>
    </source>
</evidence>
<evidence type="ECO:0000255" key="3">
    <source>
        <dbReference type="PROSITE-ProRule" id="PRU00159"/>
    </source>
</evidence>
<evidence type="ECO:0000255" key="4">
    <source>
        <dbReference type="PROSITE-ProRule" id="PRU10027"/>
    </source>
</evidence>
<evidence type="ECO:0000256" key="5">
    <source>
        <dbReference type="SAM" id="MobiDB-lite"/>
    </source>
</evidence>
<evidence type="ECO:0000269" key="6">
    <source>
    </source>
</evidence>
<evidence type="ECO:0000269" key="7">
    <source>
    </source>
</evidence>
<evidence type="ECO:0000303" key="8">
    <source>
    </source>
</evidence>
<evidence type="ECO:0000303" key="9">
    <source>
    </source>
</evidence>
<evidence type="ECO:0000305" key="10"/>
<evidence type="ECO:0000305" key="11">
    <source>
    </source>
</evidence>
<evidence type="ECO:0007744" key="12">
    <source>
    </source>
</evidence>
<evidence type="ECO:0007744" key="13">
    <source>
    </source>
</evidence>
<gene>
    <name type="primary">Camk2g</name>
</gene>
<proteinExistence type="evidence at protein level"/>
<name>KCC2G_MOUSE</name>
<comment type="function">
    <text evidence="2 7">Calcium/calmodulin-dependent protein kinase that functions autonomously after Ca(2+)/calmodulin-binding and autophosphorylation, and is involved in sarcoplasmic reticulum Ca(2+) transport in skeletal muscle and may function in dendritic spine and synapse formation and neuronal plasticity (By similarity). In slow-twitch muscles, is involved in regulation of sarcoplasmic reticulum (SR) Ca(2+) transport and in fast-twitch muscle participates in the control of Ca(2+) release from the SR through phosphorylation of the ryanodine receptor-coupling factor triadin (By similarity). In the central nervous system, it is involved in the regulation of neurite formation and arborization (PubMed:30184290). It may participate in the promotion of dendritic spine and synapse formation and maintenance of synaptic plasticity which enables long-term potentiation (LTP) and hippocampus-dependent learning (PubMed:30184290). In response to interferon-gamma (IFN-gamma) stimulation, catalyzes phosphorylation of STAT1, stimulating the JAK-STAT signaling pathway (PubMed:11972023).</text>
</comment>
<comment type="catalytic activity">
    <reaction evidence="7">
        <text>L-seryl-[protein] + ATP = O-phospho-L-seryl-[protein] + ADP + H(+)</text>
        <dbReference type="Rhea" id="RHEA:17989"/>
        <dbReference type="Rhea" id="RHEA-COMP:9863"/>
        <dbReference type="Rhea" id="RHEA-COMP:11604"/>
        <dbReference type="ChEBI" id="CHEBI:15378"/>
        <dbReference type="ChEBI" id="CHEBI:29999"/>
        <dbReference type="ChEBI" id="CHEBI:30616"/>
        <dbReference type="ChEBI" id="CHEBI:83421"/>
        <dbReference type="ChEBI" id="CHEBI:456216"/>
        <dbReference type="EC" id="2.7.11.17"/>
    </reaction>
</comment>
<comment type="catalytic activity">
    <reaction>
        <text>L-threonyl-[protein] + ATP = O-phospho-L-threonyl-[protein] + ADP + H(+)</text>
        <dbReference type="Rhea" id="RHEA:46608"/>
        <dbReference type="Rhea" id="RHEA-COMP:11060"/>
        <dbReference type="Rhea" id="RHEA-COMP:11605"/>
        <dbReference type="ChEBI" id="CHEBI:15378"/>
        <dbReference type="ChEBI" id="CHEBI:30013"/>
        <dbReference type="ChEBI" id="CHEBI:30616"/>
        <dbReference type="ChEBI" id="CHEBI:61977"/>
        <dbReference type="ChEBI" id="CHEBI:456216"/>
        <dbReference type="EC" id="2.7.11.17"/>
    </reaction>
</comment>
<comment type="activity regulation">
    <text evidence="2">Activated by Ca(2+)/calmodulin. Binding of calmodulin results in conformational change that relieves intrasteric autoinhibition and allows autophosphorylation of Thr-287 which turns the kinase in a constitutively active form and confers to the kinase a Ca(2+)-independent activity.</text>
</comment>
<comment type="subunit">
    <text evidence="2">CAMK2 is composed of 4 different chains: alpha (CAMK2A), beta (CAMK2B), gamma (CAMK2G), and delta (CAMK2D). The different isoforms assemble into homo- or heteromultimeric holoenzymes composed of 12 subunits with two hexameric rings stacked one on top of the other (By similarity).</text>
</comment>
<comment type="subcellular location">
    <subcellularLocation>
        <location evidence="10">Sarcoplasmic reticulum membrane</location>
        <topology evidence="10">Peripheral membrane protein</topology>
        <orientation evidence="10">Cytoplasmic side</orientation>
    </subcellularLocation>
</comment>
<comment type="alternative products">
    <event type="alternative splicing"/>
    <isoform>
        <id>Q923T9-1</id>
        <name>1</name>
        <sequence type="displayed"/>
    </isoform>
    <isoform>
        <id>Q923T9-2</id>
        <name>2</name>
        <sequence type="described" ref="VSP_004779"/>
    </isoform>
    <isoform>
        <id>Q923T9-3</id>
        <name>3</name>
        <sequence type="described" ref="VSP_004780"/>
    </isoform>
    <text>Additional isoforms seem to exist.</text>
</comment>
<comment type="domain">
    <text>The CAMK2 protein kinases contain a unique C-terminal subunit association domain responsible for oligomerization.</text>
</comment>
<comment type="PTM">
    <text evidence="2">Autophosphorylation of Thr-287 following activation by Ca(2+)/calmodulin. Phosphorylation of Thr-287 locks the kinase into an activated state (By similarity).</text>
</comment>
<comment type="similarity">
    <text evidence="10">Belongs to the protein kinase superfamily. CAMK Ser/Thr protein kinase family. CaMK subfamily.</text>
</comment>
<reference key="1">
    <citation type="submission" date="2001-06" db="EMBL/GenBank/DDBJ databases">
        <title>Identification of a mouse Ca2+/calmodulin-dependent protein kinase II.</title>
        <authorList>
            <person name="Szendro P.I."/>
            <person name="Cadenas C."/>
            <person name="Eichele G."/>
        </authorList>
    </citation>
    <scope>NUCLEOTIDE SEQUENCE [MRNA] (ISOFORM 1)</scope>
    <source>
        <strain>C57BL/6J</strain>
    </source>
</reference>
<reference key="2">
    <citation type="journal article" date="2005" name="Science">
        <title>The transcriptional landscape of the mammalian genome.</title>
        <authorList>
            <person name="Carninci P."/>
            <person name="Kasukawa T."/>
            <person name="Katayama S."/>
            <person name="Gough J."/>
            <person name="Frith M.C."/>
            <person name="Maeda N."/>
            <person name="Oyama R."/>
            <person name="Ravasi T."/>
            <person name="Lenhard B."/>
            <person name="Wells C."/>
            <person name="Kodzius R."/>
            <person name="Shimokawa K."/>
            <person name="Bajic V.B."/>
            <person name="Brenner S.E."/>
            <person name="Batalov S."/>
            <person name="Forrest A.R."/>
            <person name="Zavolan M."/>
            <person name="Davis M.J."/>
            <person name="Wilming L.G."/>
            <person name="Aidinis V."/>
            <person name="Allen J.E."/>
            <person name="Ambesi-Impiombato A."/>
            <person name="Apweiler R."/>
            <person name="Aturaliya R.N."/>
            <person name="Bailey T.L."/>
            <person name="Bansal M."/>
            <person name="Baxter L."/>
            <person name="Beisel K.W."/>
            <person name="Bersano T."/>
            <person name="Bono H."/>
            <person name="Chalk A.M."/>
            <person name="Chiu K.P."/>
            <person name="Choudhary V."/>
            <person name="Christoffels A."/>
            <person name="Clutterbuck D.R."/>
            <person name="Crowe M.L."/>
            <person name="Dalla E."/>
            <person name="Dalrymple B.P."/>
            <person name="de Bono B."/>
            <person name="Della Gatta G."/>
            <person name="di Bernardo D."/>
            <person name="Down T."/>
            <person name="Engstrom P."/>
            <person name="Fagiolini M."/>
            <person name="Faulkner G."/>
            <person name="Fletcher C.F."/>
            <person name="Fukushima T."/>
            <person name="Furuno M."/>
            <person name="Futaki S."/>
            <person name="Gariboldi M."/>
            <person name="Georgii-Hemming P."/>
            <person name="Gingeras T.R."/>
            <person name="Gojobori T."/>
            <person name="Green R.E."/>
            <person name="Gustincich S."/>
            <person name="Harbers M."/>
            <person name="Hayashi Y."/>
            <person name="Hensch T.K."/>
            <person name="Hirokawa N."/>
            <person name="Hill D."/>
            <person name="Huminiecki L."/>
            <person name="Iacono M."/>
            <person name="Ikeo K."/>
            <person name="Iwama A."/>
            <person name="Ishikawa T."/>
            <person name="Jakt M."/>
            <person name="Kanapin A."/>
            <person name="Katoh M."/>
            <person name="Kawasawa Y."/>
            <person name="Kelso J."/>
            <person name="Kitamura H."/>
            <person name="Kitano H."/>
            <person name="Kollias G."/>
            <person name="Krishnan S.P."/>
            <person name="Kruger A."/>
            <person name="Kummerfeld S.K."/>
            <person name="Kurochkin I.V."/>
            <person name="Lareau L.F."/>
            <person name="Lazarevic D."/>
            <person name="Lipovich L."/>
            <person name="Liu J."/>
            <person name="Liuni S."/>
            <person name="McWilliam S."/>
            <person name="Madan Babu M."/>
            <person name="Madera M."/>
            <person name="Marchionni L."/>
            <person name="Matsuda H."/>
            <person name="Matsuzawa S."/>
            <person name="Miki H."/>
            <person name="Mignone F."/>
            <person name="Miyake S."/>
            <person name="Morris K."/>
            <person name="Mottagui-Tabar S."/>
            <person name="Mulder N."/>
            <person name="Nakano N."/>
            <person name="Nakauchi H."/>
            <person name="Ng P."/>
            <person name="Nilsson R."/>
            <person name="Nishiguchi S."/>
            <person name="Nishikawa S."/>
            <person name="Nori F."/>
            <person name="Ohara O."/>
            <person name="Okazaki Y."/>
            <person name="Orlando V."/>
            <person name="Pang K.C."/>
            <person name="Pavan W.J."/>
            <person name="Pavesi G."/>
            <person name="Pesole G."/>
            <person name="Petrovsky N."/>
            <person name="Piazza S."/>
            <person name="Reed J."/>
            <person name="Reid J.F."/>
            <person name="Ring B.Z."/>
            <person name="Ringwald M."/>
            <person name="Rost B."/>
            <person name="Ruan Y."/>
            <person name="Salzberg S.L."/>
            <person name="Sandelin A."/>
            <person name="Schneider C."/>
            <person name="Schoenbach C."/>
            <person name="Sekiguchi K."/>
            <person name="Semple C.A."/>
            <person name="Seno S."/>
            <person name="Sessa L."/>
            <person name="Sheng Y."/>
            <person name="Shibata Y."/>
            <person name="Shimada H."/>
            <person name="Shimada K."/>
            <person name="Silva D."/>
            <person name="Sinclair B."/>
            <person name="Sperling S."/>
            <person name="Stupka E."/>
            <person name="Sugiura K."/>
            <person name="Sultana R."/>
            <person name="Takenaka Y."/>
            <person name="Taki K."/>
            <person name="Tammoja K."/>
            <person name="Tan S.L."/>
            <person name="Tang S."/>
            <person name="Taylor M.S."/>
            <person name="Tegner J."/>
            <person name="Teichmann S.A."/>
            <person name="Ueda H.R."/>
            <person name="van Nimwegen E."/>
            <person name="Verardo R."/>
            <person name="Wei C.L."/>
            <person name="Yagi K."/>
            <person name="Yamanishi H."/>
            <person name="Zabarovsky E."/>
            <person name="Zhu S."/>
            <person name="Zimmer A."/>
            <person name="Hide W."/>
            <person name="Bult C."/>
            <person name="Grimmond S.M."/>
            <person name="Teasdale R.D."/>
            <person name="Liu E.T."/>
            <person name="Brusic V."/>
            <person name="Quackenbush J."/>
            <person name="Wahlestedt C."/>
            <person name="Mattick J.S."/>
            <person name="Hume D.A."/>
            <person name="Kai C."/>
            <person name="Sasaki D."/>
            <person name="Tomaru Y."/>
            <person name="Fukuda S."/>
            <person name="Kanamori-Katayama M."/>
            <person name="Suzuki M."/>
            <person name="Aoki J."/>
            <person name="Arakawa T."/>
            <person name="Iida J."/>
            <person name="Imamura K."/>
            <person name="Itoh M."/>
            <person name="Kato T."/>
            <person name="Kawaji H."/>
            <person name="Kawagashira N."/>
            <person name="Kawashima T."/>
            <person name="Kojima M."/>
            <person name="Kondo S."/>
            <person name="Konno H."/>
            <person name="Nakano K."/>
            <person name="Ninomiya N."/>
            <person name="Nishio T."/>
            <person name="Okada M."/>
            <person name="Plessy C."/>
            <person name="Shibata K."/>
            <person name="Shiraki T."/>
            <person name="Suzuki S."/>
            <person name="Tagami M."/>
            <person name="Waki K."/>
            <person name="Watahiki A."/>
            <person name="Okamura-Oho Y."/>
            <person name="Suzuki H."/>
            <person name="Kawai J."/>
            <person name="Hayashizaki Y."/>
        </authorList>
    </citation>
    <scope>NUCLEOTIDE SEQUENCE [LARGE SCALE MRNA] (ISOFORM 2)</scope>
    <source>
        <strain>NOD</strain>
        <tissue>Dendritic cell</tissue>
    </source>
</reference>
<reference key="3">
    <citation type="journal article" date="2004" name="Genome Res.">
        <title>The status, quality, and expansion of the NIH full-length cDNA project: the Mammalian Gene Collection (MGC).</title>
        <authorList>
            <consortium name="The MGC Project Team"/>
        </authorList>
    </citation>
    <scope>NUCLEOTIDE SEQUENCE [LARGE SCALE MRNA] (ISOFORMS 2 AND 3)</scope>
</reference>
<reference key="4">
    <citation type="journal article" date="2002" name="Proc. Natl. Acad. Sci. U.S.A.">
        <title>Requirement of Ca2+ and CaMKII for Stat1 Ser-727 phosphorylation in response to IFN-gamma.</title>
        <authorList>
            <person name="Nair J.S."/>
            <person name="DaFonseca C.J."/>
            <person name="Tjernberg A."/>
            <person name="Sun W."/>
            <person name="Darnell J.E. Jr."/>
            <person name="Chait B.T."/>
            <person name="Zhang J.J."/>
        </authorList>
    </citation>
    <scope>FUNCTION</scope>
    <scope>CATALYTIC ACTIVITY</scope>
    <scope>MUTAGENESIS OF LYS-43</scope>
</reference>
<reference key="5">
    <citation type="journal article" date="2006" name="Mol. Cell. Proteomics">
        <title>Comprehensive identification of phosphorylation sites in postsynaptic density preparations.</title>
        <authorList>
            <person name="Trinidad J.C."/>
            <person name="Specht C.G."/>
            <person name="Thalhammer A."/>
            <person name="Schoepfer R."/>
            <person name="Burlingame A.L."/>
        </authorList>
    </citation>
    <scope>PHOSPHORYLATION [LARGE SCALE ANALYSIS] AT THR-287</scope>
    <scope>IDENTIFICATION BY MASS SPECTROMETRY [LARGE SCALE ANALYSIS]</scope>
    <source>
        <tissue>Brain</tissue>
    </source>
</reference>
<reference key="6">
    <citation type="journal article" date="2007" name="Mol. Cell. Proteomics">
        <title>Qualitative and quantitative analyses of protein phosphorylation in naive and stimulated mouse synaptosomal preparations.</title>
        <authorList>
            <person name="Munton R.P."/>
            <person name="Tweedie-Cullen R."/>
            <person name="Livingstone-Zatchej M."/>
            <person name="Weinandy F."/>
            <person name="Waidelich M."/>
            <person name="Longo D."/>
            <person name="Gehrig P."/>
            <person name="Potthast F."/>
            <person name="Rutishauser D."/>
            <person name="Gerrits B."/>
            <person name="Panse C."/>
            <person name="Schlapbach R."/>
            <person name="Mansuy I.M."/>
        </authorList>
    </citation>
    <scope>IDENTIFICATION BY MASS SPECTROMETRY [LARGE SCALE ANALYSIS]</scope>
    <source>
        <tissue>Brain cortex</tissue>
    </source>
</reference>
<reference key="7">
    <citation type="journal article" date="2010" name="Cell">
        <title>A tissue-specific atlas of mouse protein phosphorylation and expression.</title>
        <authorList>
            <person name="Huttlin E.L."/>
            <person name="Jedrychowski M.P."/>
            <person name="Elias J.E."/>
            <person name="Goswami T."/>
            <person name="Rad R."/>
            <person name="Beausoleil S.A."/>
            <person name="Villen J."/>
            <person name="Haas W."/>
            <person name="Sowa M.E."/>
            <person name="Gygi S.P."/>
        </authorList>
    </citation>
    <scope>PHOSPHORYLATION [LARGE SCALE ANALYSIS] AT SER-311</scope>
    <scope>IDENTIFICATION BY MASS SPECTROMETRY [LARGE SCALE ANALYSIS]</scope>
    <source>
        <tissue>Brain</tissue>
        <tissue>Heart</tissue>
        <tissue>Kidney</tissue>
        <tissue>Spleen</tissue>
    </source>
</reference>
<reference key="8">
    <citation type="journal article" date="2018" name="Hum. Mutat.">
        <title>The intellectual disability-associated CAMK2G p.Arg292Pro mutation acts as a pathogenic gain-of-function.</title>
        <authorList>
            <person name="Proietti Onori M."/>
            <person name="Koopal B."/>
            <person name="Everman D.B."/>
            <person name="Worthington J.D."/>
            <person name="Jones J.R."/>
            <person name="Ploeg M.A."/>
            <person name="Mientjes E."/>
            <person name="van Bon B.W."/>
            <person name="Kleefstra T."/>
            <person name="Schulman H."/>
            <person name="Kushner S.A."/>
            <person name="Kuery S."/>
            <person name="Elgersma Y."/>
            <person name="van Woerden G.M."/>
        </authorList>
    </citation>
    <scope>FUNCTION</scope>
</reference>
<organism>
    <name type="scientific">Mus musculus</name>
    <name type="common">Mouse</name>
    <dbReference type="NCBI Taxonomy" id="10090"/>
    <lineage>
        <taxon>Eukaryota</taxon>
        <taxon>Metazoa</taxon>
        <taxon>Chordata</taxon>
        <taxon>Craniata</taxon>
        <taxon>Vertebrata</taxon>
        <taxon>Euteleostomi</taxon>
        <taxon>Mammalia</taxon>
        <taxon>Eutheria</taxon>
        <taxon>Euarchontoglires</taxon>
        <taxon>Glires</taxon>
        <taxon>Rodentia</taxon>
        <taxon>Myomorpha</taxon>
        <taxon>Muroidea</taxon>
        <taxon>Muridae</taxon>
        <taxon>Murinae</taxon>
        <taxon>Mus</taxon>
        <taxon>Mus</taxon>
    </lineage>
</organism>
<keyword id="KW-0025">Alternative splicing</keyword>
<keyword id="KW-0067">ATP-binding</keyword>
<keyword id="KW-0112">Calmodulin-binding</keyword>
<keyword id="KW-0217">Developmental protein</keyword>
<keyword id="KW-0221">Differentiation</keyword>
<keyword id="KW-0418">Kinase</keyword>
<keyword id="KW-0472">Membrane</keyword>
<keyword id="KW-0524">Neurogenesis</keyword>
<keyword id="KW-0547">Nucleotide-binding</keyword>
<keyword id="KW-0597">Phosphoprotein</keyword>
<keyword id="KW-1185">Reference proteome</keyword>
<keyword id="KW-0703">Sarcoplasmic reticulum</keyword>
<keyword id="KW-0723">Serine/threonine-protein kinase</keyword>
<keyword id="KW-0808">Transferase</keyword>
<accession>Q923T9</accession>
<accession>Q3U3H3</accession>
<accession>Q8VED3</accession>
<dbReference type="EC" id="2.7.11.17" evidence="6"/>
<dbReference type="EMBL" id="AF395884">
    <property type="protein sequence ID" value="AAK84142.1"/>
    <property type="molecule type" value="mRNA"/>
</dbReference>
<dbReference type="EMBL" id="AK154764">
    <property type="protein sequence ID" value="BAE32813.1"/>
    <property type="molecule type" value="mRNA"/>
</dbReference>
<dbReference type="EMBL" id="BC019162">
    <property type="protein sequence ID" value="AAH19162.1"/>
    <property type="molecule type" value="mRNA"/>
</dbReference>
<dbReference type="EMBL" id="BC025597">
    <property type="protein sequence ID" value="AAH25597.1"/>
    <property type="molecule type" value="mRNA"/>
</dbReference>
<dbReference type="CCDS" id="CCDS26855.1">
    <molecule id="Q923T9-2"/>
</dbReference>
<dbReference type="CCDS" id="CCDS26856.1">
    <molecule id="Q923T9-3"/>
</dbReference>
<dbReference type="CCDS" id="CCDS26857.1">
    <molecule id="Q923T9-1"/>
</dbReference>
<dbReference type="RefSeq" id="NP_001034227.1">
    <molecule id="Q923T9-2"/>
    <property type="nucleotide sequence ID" value="NM_001039138.3"/>
</dbReference>
<dbReference type="RefSeq" id="NP_001034228.1">
    <molecule id="Q923T9-3"/>
    <property type="nucleotide sequence ID" value="NM_001039139.3"/>
</dbReference>
<dbReference type="RefSeq" id="NP_848712.2">
    <molecule id="Q923T9-1"/>
    <property type="nucleotide sequence ID" value="NM_178597.6"/>
</dbReference>
<dbReference type="SMR" id="Q923T9"/>
<dbReference type="BioGRID" id="198463">
    <property type="interactions" value="26"/>
</dbReference>
<dbReference type="FunCoup" id="Q923T9">
    <property type="interactions" value="2531"/>
</dbReference>
<dbReference type="IntAct" id="Q923T9">
    <property type="interactions" value="11"/>
</dbReference>
<dbReference type="MINT" id="Q923T9"/>
<dbReference type="STRING" id="10090.ENSMUSP00000071720"/>
<dbReference type="GlyGen" id="Q923T9">
    <property type="glycosylation" value="2 sites, 1 O-linked glycan (1 site)"/>
</dbReference>
<dbReference type="iPTMnet" id="Q923T9"/>
<dbReference type="PhosphoSitePlus" id="Q923T9"/>
<dbReference type="SwissPalm" id="Q923T9"/>
<dbReference type="jPOST" id="Q923T9"/>
<dbReference type="PaxDb" id="10090-ENSMUSP00000071720"/>
<dbReference type="PeptideAtlas" id="Q923T9"/>
<dbReference type="ProteomicsDB" id="269183">
    <molecule id="Q923T9-1"/>
</dbReference>
<dbReference type="ProteomicsDB" id="269184">
    <molecule id="Q923T9-2"/>
</dbReference>
<dbReference type="ProteomicsDB" id="269185">
    <molecule id="Q923T9-3"/>
</dbReference>
<dbReference type="Pumba" id="Q923T9"/>
<dbReference type="Antibodypedia" id="29531">
    <property type="antibodies" value="441 antibodies from 36 providers"/>
</dbReference>
<dbReference type="DNASU" id="12325"/>
<dbReference type="Ensembl" id="ENSMUST00000071816.7">
    <molecule id="Q923T9-1"/>
    <property type="protein sequence ID" value="ENSMUSP00000071720.7"/>
    <property type="gene ID" value="ENSMUSG00000021820.19"/>
</dbReference>
<dbReference type="Ensembl" id="ENSMUST00000080440.14">
    <molecule id="Q923T9-2"/>
    <property type="protein sequence ID" value="ENSMUSP00000079298.7"/>
    <property type="gene ID" value="ENSMUSG00000021820.19"/>
</dbReference>
<dbReference type="Ensembl" id="ENSMUST00000100837.11">
    <molecule id="Q923T9-3"/>
    <property type="protein sequence ID" value="ENSMUSP00000098398.4"/>
    <property type="gene ID" value="ENSMUSG00000021820.19"/>
</dbReference>
<dbReference type="GeneID" id="12325"/>
<dbReference type="KEGG" id="mmu:12325"/>
<dbReference type="UCSC" id="uc007skt.2">
    <molecule id="Q923T9-1"/>
    <property type="organism name" value="mouse"/>
</dbReference>
<dbReference type="UCSC" id="uc007sku.2">
    <molecule id="Q923T9-2"/>
    <property type="organism name" value="mouse"/>
</dbReference>
<dbReference type="AGR" id="MGI:88259"/>
<dbReference type="CTD" id="818"/>
<dbReference type="MGI" id="MGI:88259">
    <property type="gene designation" value="Camk2g"/>
</dbReference>
<dbReference type="VEuPathDB" id="HostDB:ENSMUSG00000021820"/>
<dbReference type="eggNOG" id="KOG0033">
    <property type="taxonomic scope" value="Eukaryota"/>
</dbReference>
<dbReference type="GeneTree" id="ENSGT00940000156481"/>
<dbReference type="HOGENOM" id="CLU_000288_71_0_1"/>
<dbReference type="InParanoid" id="Q923T9"/>
<dbReference type="OMA" id="QSVQHCH"/>
<dbReference type="PhylomeDB" id="Q923T9"/>
<dbReference type="TreeFam" id="TF315229"/>
<dbReference type="BRENDA" id="2.7.11.17">
    <property type="organism ID" value="3474"/>
</dbReference>
<dbReference type="Reactome" id="R-MMU-3371571">
    <property type="pathway name" value="HSF1-dependent transactivation"/>
</dbReference>
<dbReference type="Reactome" id="R-MMU-399719">
    <property type="pathway name" value="Trafficking of AMPA receptors"/>
</dbReference>
<dbReference type="Reactome" id="R-MMU-438066">
    <property type="pathway name" value="Unblocking of NMDA receptors, glutamate binding and activation"/>
</dbReference>
<dbReference type="Reactome" id="R-MMU-5578775">
    <property type="pathway name" value="Ion homeostasis"/>
</dbReference>
<dbReference type="Reactome" id="R-MMU-5673000">
    <property type="pathway name" value="RAF activation"/>
</dbReference>
<dbReference type="Reactome" id="R-MMU-5673001">
    <property type="pathway name" value="RAF/MAP kinase cascade"/>
</dbReference>
<dbReference type="Reactome" id="R-MMU-877300">
    <property type="pathway name" value="Interferon gamma signaling"/>
</dbReference>
<dbReference type="Reactome" id="R-MMU-936837">
    <property type="pathway name" value="Ion transport by P-type ATPases"/>
</dbReference>
<dbReference type="BioGRID-ORCS" id="12325">
    <property type="hits" value="2 hits in 81 CRISPR screens"/>
</dbReference>
<dbReference type="CD-CODE" id="CE726F99">
    <property type="entry name" value="Postsynaptic density"/>
</dbReference>
<dbReference type="ChiTaRS" id="Camk2g">
    <property type="organism name" value="mouse"/>
</dbReference>
<dbReference type="PRO" id="PR:Q923T9"/>
<dbReference type="Proteomes" id="UP000000589">
    <property type="component" value="Chromosome 14"/>
</dbReference>
<dbReference type="RNAct" id="Q923T9">
    <property type="molecule type" value="protein"/>
</dbReference>
<dbReference type="Bgee" id="ENSMUSG00000021820">
    <property type="expression patterns" value="Expressed in animal zygote and 237 other cell types or tissues"/>
</dbReference>
<dbReference type="ExpressionAtlas" id="Q923T9">
    <property type="expression patterns" value="baseline and differential"/>
</dbReference>
<dbReference type="GO" id="GO:0014069">
    <property type="term" value="C:postsynaptic density"/>
    <property type="evidence" value="ECO:0000314"/>
    <property type="project" value="MGI"/>
</dbReference>
<dbReference type="GO" id="GO:0033017">
    <property type="term" value="C:sarcoplasmic reticulum membrane"/>
    <property type="evidence" value="ECO:0007669"/>
    <property type="project" value="UniProtKB-SubCell"/>
</dbReference>
<dbReference type="GO" id="GO:0005524">
    <property type="term" value="F:ATP binding"/>
    <property type="evidence" value="ECO:0007669"/>
    <property type="project" value="UniProtKB-KW"/>
</dbReference>
<dbReference type="GO" id="GO:0004683">
    <property type="term" value="F:calcium/calmodulin-dependent protein kinase activity"/>
    <property type="evidence" value="ECO:0000314"/>
    <property type="project" value="UniProtKB"/>
</dbReference>
<dbReference type="GO" id="GO:0005516">
    <property type="term" value="F:calmodulin binding"/>
    <property type="evidence" value="ECO:0007669"/>
    <property type="project" value="UniProtKB-KW"/>
</dbReference>
<dbReference type="GO" id="GO:0106310">
    <property type="term" value="F:protein serine kinase activity"/>
    <property type="evidence" value="ECO:0007669"/>
    <property type="project" value="RHEA"/>
</dbReference>
<dbReference type="GO" id="GO:0004674">
    <property type="term" value="F:protein serine/threonine kinase activity"/>
    <property type="evidence" value="ECO:0000315"/>
    <property type="project" value="MGI"/>
</dbReference>
<dbReference type="GO" id="GO:0006816">
    <property type="term" value="P:calcium ion transport"/>
    <property type="evidence" value="ECO:0000315"/>
    <property type="project" value="MGI"/>
</dbReference>
<dbReference type="GO" id="GO:0030154">
    <property type="term" value="P:cell differentiation"/>
    <property type="evidence" value="ECO:0007669"/>
    <property type="project" value="UniProtKB-KW"/>
</dbReference>
<dbReference type="GO" id="GO:0000082">
    <property type="term" value="P:G1/S transition of mitotic cell cycle"/>
    <property type="evidence" value="ECO:0000315"/>
    <property type="project" value="MGI"/>
</dbReference>
<dbReference type="GO" id="GO:0007399">
    <property type="term" value="P:nervous system development"/>
    <property type="evidence" value="ECO:0007669"/>
    <property type="project" value="UniProtKB-KW"/>
</dbReference>
<dbReference type="GO" id="GO:0010975">
    <property type="term" value="P:regulation of neuron projection development"/>
    <property type="evidence" value="ECO:0000315"/>
    <property type="project" value="UniProtKB"/>
</dbReference>
<dbReference type="GO" id="GO:1901897">
    <property type="term" value="P:regulation of relaxation of cardiac muscle"/>
    <property type="evidence" value="ECO:0000316"/>
    <property type="project" value="BHF-UCL"/>
</dbReference>
<dbReference type="CDD" id="cd14086">
    <property type="entry name" value="STKc_CaMKII"/>
    <property type="match status" value="1"/>
</dbReference>
<dbReference type="FunFam" id="1.10.510.10:FF:000001">
    <property type="entry name" value="Calcium/calmodulin-dependent protein kinase type II subunit delta"/>
    <property type="match status" value="1"/>
</dbReference>
<dbReference type="FunFam" id="3.30.200.20:FF:000002">
    <property type="entry name" value="Calcium/calmodulin-dependent protein kinase type II subunit delta isoform 2"/>
    <property type="match status" value="1"/>
</dbReference>
<dbReference type="FunFam" id="3.10.450.50:FF:000001">
    <property type="entry name" value="calcium/calmodulin-dependent protein kinase type II subunit gamma isoform X1"/>
    <property type="match status" value="1"/>
</dbReference>
<dbReference type="Gene3D" id="3.10.450.50">
    <property type="match status" value="1"/>
</dbReference>
<dbReference type="Gene3D" id="6.10.140.620">
    <property type="match status" value="1"/>
</dbReference>
<dbReference type="Gene3D" id="3.30.200.20">
    <property type="entry name" value="Phosphorylase Kinase, domain 1"/>
    <property type="match status" value="1"/>
</dbReference>
<dbReference type="Gene3D" id="1.10.510.10">
    <property type="entry name" value="Transferase(Phosphotransferase) domain 1"/>
    <property type="match status" value="1"/>
</dbReference>
<dbReference type="InterPro" id="IPR013543">
    <property type="entry name" value="Ca/CaM-dep_prot_kinase-assoc"/>
</dbReference>
<dbReference type="InterPro" id="IPR011009">
    <property type="entry name" value="Kinase-like_dom_sf"/>
</dbReference>
<dbReference type="InterPro" id="IPR032710">
    <property type="entry name" value="NTF2-like_dom_sf"/>
</dbReference>
<dbReference type="InterPro" id="IPR000719">
    <property type="entry name" value="Prot_kinase_dom"/>
</dbReference>
<dbReference type="InterPro" id="IPR017441">
    <property type="entry name" value="Protein_kinase_ATP_BS"/>
</dbReference>
<dbReference type="InterPro" id="IPR008271">
    <property type="entry name" value="Ser/Thr_kinase_AS"/>
</dbReference>
<dbReference type="PANTHER" id="PTHR24347">
    <property type="entry name" value="SERINE/THREONINE-PROTEIN KINASE"/>
    <property type="match status" value="1"/>
</dbReference>
<dbReference type="Pfam" id="PF08332">
    <property type="entry name" value="CaMKII_AD"/>
    <property type="match status" value="1"/>
</dbReference>
<dbReference type="Pfam" id="PF00069">
    <property type="entry name" value="Pkinase"/>
    <property type="match status" value="1"/>
</dbReference>
<dbReference type="SMART" id="SM00220">
    <property type="entry name" value="S_TKc"/>
    <property type="match status" value="1"/>
</dbReference>
<dbReference type="SUPFAM" id="SSF54427">
    <property type="entry name" value="NTF2-like"/>
    <property type="match status" value="1"/>
</dbReference>
<dbReference type="SUPFAM" id="SSF56112">
    <property type="entry name" value="Protein kinase-like (PK-like)"/>
    <property type="match status" value="1"/>
</dbReference>
<dbReference type="PROSITE" id="PS00107">
    <property type="entry name" value="PROTEIN_KINASE_ATP"/>
    <property type="match status" value="1"/>
</dbReference>
<dbReference type="PROSITE" id="PS50011">
    <property type="entry name" value="PROTEIN_KINASE_DOM"/>
    <property type="match status" value="1"/>
</dbReference>
<dbReference type="PROSITE" id="PS00108">
    <property type="entry name" value="PROTEIN_KINASE_ST"/>
    <property type="match status" value="1"/>
</dbReference>
<sequence length="529" mass="59607">MATTATCTRFTDDYQLFEELGKGAFSVVRRCVKKTSTQEYAAKIINTKKLSARDHQKLEREARICRLLKHPNIVRLHDSISEEGFHYLVFDLVTGGELFEDIVAREYYSEADASHCIHQILESVNHIHQHDIVHRDLKPENLLLASKCKGAAVKLADFGLAIEVQGEQQAWFGFAGTPGYLSPEVLRKDPYGKPVDIWACGVILYILLVGYPPFWDEDQHKLYQQIKAGAYDFPSPEWDTVTPEAKNLINQMLTINPAKRITADQALKHPWVCQRSTVASMMHRQETVECLRKFNARRKLKGAILTTMLVSRNFSAAKSLLNKKSDGGVKKRKSSSSVHLMPQSNNKNSLVSPAQEPAPLQTAMEPQTTVVHNATDGIKGSTESCNTTTEDEDLKVRKQEIIKITEQLIEAINNGDFEAYTKICDPGLTSFEPEALGNLVEGMDFHKFYFENLLSKNSKPIHTTILNPHVHVIGEDAACIAYIRLTQYIDGQGRPRTSQSEETRVWHRRDGKWLNVHYHCSGAPAAPLQ</sequence>
<feature type="chain" id="PRO_0000086102" description="Calcium/calmodulin-dependent protein kinase type II subunit gamma">
    <location>
        <begin position="1"/>
        <end position="529"/>
    </location>
</feature>
<feature type="domain" description="Protein kinase" evidence="3">
    <location>
        <begin position="14"/>
        <end position="272"/>
    </location>
</feature>
<feature type="region of interest" description="Autoinhibitory domain" evidence="2">
    <location>
        <begin position="283"/>
        <end position="292"/>
    </location>
</feature>
<feature type="region of interest" description="Calmodulin-binding" evidence="2">
    <location>
        <begin position="294"/>
        <end position="316"/>
    </location>
</feature>
<feature type="region of interest" description="Disordered" evidence="5">
    <location>
        <begin position="324"/>
        <end position="353"/>
    </location>
</feature>
<feature type="compositionally biased region" description="Polar residues" evidence="5">
    <location>
        <begin position="342"/>
        <end position="352"/>
    </location>
</feature>
<feature type="active site" description="Proton acceptor" evidence="3 4">
    <location>
        <position position="136"/>
    </location>
</feature>
<feature type="binding site" evidence="3">
    <location>
        <begin position="20"/>
        <end position="28"/>
    </location>
    <ligand>
        <name>ATP</name>
        <dbReference type="ChEBI" id="CHEBI:30616"/>
    </ligand>
</feature>
<feature type="binding site" evidence="3 11">
    <location>
        <position position="43"/>
    </location>
    <ligand>
        <name>ATP</name>
        <dbReference type="ChEBI" id="CHEBI:30616"/>
    </ligand>
</feature>
<feature type="modified residue" description="Phosphothreonine; by autocatalysis" evidence="12">
    <location>
        <position position="287"/>
    </location>
</feature>
<feature type="modified residue" description="Phosphothreonine; by autocatalysis" evidence="10">
    <location>
        <position position="306"/>
    </location>
</feature>
<feature type="modified residue" description="Phosphothreonine; by autocatalysis" evidence="10">
    <location>
        <position position="307"/>
    </location>
</feature>
<feature type="modified residue" description="Phosphoserine" evidence="13">
    <location>
        <position position="311"/>
    </location>
</feature>
<feature type="modified residue" description="Phosphoserine" evidence="1">
    <location>
        <position position="334"/>
    </location>
</feature>
<feature type="modified residue" description="Phosphoserine" evidence="2">
    <location>
        <position position="349"/>
    </location>
</feature>
<feature type="modified residue" description="Phosphoserine" evidence="2">
    <location>
        <position position="352"/>
    </location>
</feature>
<feature type="modified residue" description="Phosphoserine" evidence="1">
    <location>
        <position position="455"/>
    </location>
</feature>
<feature type="splice variant" id="VSP_004780" description="In isoform 3." evidence="8">
    <location>
        <begin position="331"/>
        <end position="364"/>
    </location>
</feature>
<feature type="splice variant" id="VSP_004779" description="In isoform 2." evidence="8 9">
    <location>
        <begin position="331"/>
        <end position="341"/>
    </location>
</feature>
<feature type="mutagenesis site" description="Abolished calmodulin-dependent protein kinase activity. Abolished ability to phosphorylate STAT1." evidence="6">
    <original>K</original>
    <variation>M</variation>
    <location>
        <position position="43"/>
    </location>
</feature>
<protein>
    <recommendedName>
        <fullName>Calcium/calmodulin-dependent protein kinase type II subunit gamma</fullName>
        <shortName>CaM kinase II subunit gamma</shortName>
        <shortName>CaMK-II subunit gamma</shortName>
        <ecNumber evidence="6">2.7.11.17</ecNumber>
    </recommendedName>
</protein>